<protein>
    <recommendedName>
        <fullName>Sucrose synthase</fullName>
        <ecNumber>2.4.1.13</ecNumber>
    </recommendedName>
    <alternativeName>
        <fullName>Nodulin-100</fullName>
        <shortName>N-100</shortName>
    </alternativeName>
    <alternativeName>
        <fullName>Sucrose-UDP glucosyltransferase</fullName>
    </alternativeName>
</protein>
<reference key="1">
    <citation type="online journal article" date="1997" name="Plant Gene Register">
        <title>Cloning of a full-length sucrose synthase cDNA from soybean (Glycine max) root nodules.</title>
        <authorList>
            <person name="Zhang X.-Q."/>
            <person name="Verma D.P.S."/>
            <person name="Patil S."/>
            <person name="Arredondo-Peter R."/>
            <person name="Miao G.-H."/>
            <person name="Kuismanen R."/>
            <person name="Klucas R.V."/>
            <person name="Chollet R."/>
        </authorList>
        <locator>PGR97-173</locator>
    </citation>
    <scope>NUCLEOTIDE SEQUENCE [MRNA]</scope>
    <source>
        <strain>cv. Hobbit</strain>
        <tissue>Root nodule</tissue>
    </source>
</reference>
<reference key="2">
    <citation type="journal article" date="1987" name="J. Biol. Chem.">
        <title>Nodulin-100 of soybean is the subunit of sucrose synthase regulated by the availability of free heme in nodules.</title>
        <authorList>
            <person name="Thummler F."/>
            <person name="Verma D.P.S."/>
        </authorList>
    </citation>
    <scope>NUCLEOTIDE SEQUENCE [MRNA] OF 679-805</scope>
    <source>
        <strain>cv. Prize</strain>
        <tissue>Root nodule</tissue>
    </source>
</reference>
<reference key="3">
    <citation type="journal article" date="1997" name="FEBS Lett.">
        <title>Seryl-phosphorylation of soybean nodule sucrose synthase (nodulin-100) by a Ca2+-dependent protein kinase.</title>
        <authorList>
            <person name="Zhang X.-Q."/>
            <person name="Chollet R."/>
        </authorList>
    </citation>
    <scope>PHOSPHORYLATION</scope>
</reference>
<dbReference type="EC" id="2.4.1.13"/>
<dbReference type="EMBL" id="AF030231">
    <property type="protein sequence ID" value="AAC39323.1"/>
    <property type="molecule type" value="mRNA"/>
</dbReference>
<dbReference type="PIR" id="A29484">
    <property type="entry name" value="A29484"/>
</dbReference>
<dbReference type="RefSeq" id="NP_001237525.1">
    <property type="nucleotide sequence ID" value="NM_001250596.2"/>
</dbReference>
<dbReference type="RefSeq" id="XP_025980606.1">
    <property type="nucleotide sequence ID" value="XM_026124821.2"/>
</dbReference>
<dbReference type="RefSeq" id="XP_025980607.1">
    <property type="nucleotide sequence ID" value="XM_026124822.2"/>
</dbReference>
<dbReference type="RefSeq" id="XP_025980608.1">
    <property type="nucleotide sequence ID" value="XM_026124823.2"/>
</dbReference>
<dbReference type="SMR" id="P13708"/>
<dbReference type="FunCoup" id="P13708">
    <property type="interactions" value="276"/>
</dbReference>
<dbReference type="STRING" id="3847.P13708"/>
<dbReference type="iPTMnet" id="P13708"/>
<dbReference type="PaxDb" id="3847-GLYMA13G17421.1"/>
<dbReference type="ProMEX" id="P13708"/>
<dbReference type="EnsemblPlants" id="KRH19379">
    <property type="protein sequence ID" value="KRH19379"/>
    <property type="gene ID" value="GLYMA_13G114000"/>
</dbReference>
<dbReference type="EnsemblPlants" id="KRH19380">
    <property type="protein sequence ID" value="KRH19380"/>
    <property type="gene ID" value="GLYMA_13G114000"/>
</dbReference>
<dbReference type="EnsemblPlants" id="KRH19381">
    <property type="protein sequence ID" value="KRH19381"/>
    <property type="gene ID" value="GLYMA_13G114000"/>
</dbReference>
<dbReference type="GeneID" id="547508"/>
<dbReference type="Gramene" id="KRH19379">
    <property type="protein sequence ID" value="KRH19379"/>
    <property type="gene ID" value="GLYMA_13G114000"/>
</dbReference>
<dbReference type="Gramene" id="KRH19380">
    <property type="protein sequence ID" value="KRH19380"/>
    <property type="gene ID" value="GLYMA_13G114000"/>
</dbReference>
<dbReference type="Gramene" id="KRH19381">
    <property type="protein sequence ID" value="KRH19381"/>
    <property type="gene ID" value="GLYMA_13G114000"/>
</dbReference>
<dbReference type="KEGG" id="gmx:547508"/>
<dbReference type="eggNOG" id="KOG0853">
    <property type="taxonomic scope" value="Eukaryota"/>
</dbReference>
<dbReference type="InParanoid" id="P13708"/>
<dbReference type="OrthoDB" id="937291at2759"/>
<dbReference type="BioCyc" id="MetaCyc:MONOMER-8881"/>
<dbReference type="BRENDA" id="2.4.1.13">
    <property type="organism ID" value="2483"/>
</dbReference>
<dbReference type="Proteomes" id="UP000008827">
    <property type="component" value="Chromosome 13"/>
</dbReference>
<dbReference type="GO" id="GO:0016157">
    <property type="term" value="F:sucrose synthase activity"/>
    <property type="evidence" value="ECO:0000318"/>
    <property type="project" value="GO_Central"/>
</dbReference>
<dbReference type="GO" id="GO:0009877">
    <property type="term" value="P:nodulation"/>
    <property type="evidence" value="ECO:0007669"/>
    <property type="project" value="UniProtKB-KW"/>
</dbReference>
<dbReference type="GO" id="GO:0005985">
    <property type="term" value="P:sucrose metabolic process"/>
    <property type="evidence" value="ECO:0007669"/>
    <property type="project" value="InterPro"/>
</dbReference>
<dbReference type="FunFam" id="1.20.120.1230:FF:000001">
    <property type="entry name" value="Sucrose synthase"/>
    <property type="match status" value="1"/>
</dbReference>
<dbReference type="FunFam" id="3.10.450.330:FF:000001">
    <property type="entry name" value="Sucrose synthase"/>
    <property type="match status" value="1"/>
</dbReference>
<dbReference type="FunFam" id="3.40.50.2000:FF:000004">
    <property type="entry name" value="Sucrose synthase"/>
    <property type="match status" value="1"/>
</dbReference>
<dbReference type="Gene3D" id="1.20.120.1230">
    <property type="match status" value="1"/>
</dbReference>
<dbReference type="Gene3D" id="3.10.450.330">
    <property type="match status" value="1"/>
</dbReference>
<dbReference type="Gene3D" id="3.40.50.2000">
    <property type="entry name" value="Glycogen Phosphorylase B"/>
    <property type="match status" value="2"/>
</dbReference>
<dbReference type="InterPro" id="IPR001296">
    <property type="entry name" value="Glyco_trans_1"/>
</dbReference>
<dbReference type="InterPro" id="IPR000368">
    <property type="entry name" value="Sucrose_synth_GT-B1"/>
</dbReference>
<dbReference type="InterPro" id="IPR012820">
    <property type="entry name" value="Sucrose_synthase_pln/cyn"/>
</dbReference>
<dbReference type="InterPro" id="IPR056736">
    <property type="entry name" value="SUS_EPBD"/>
</dbReference>
<dbReference type="InterPro" id="IPR056735">
    <property type="entry name" value="SUS_N"/>
</dbReference>
<dbReference type="NCBIfam" id="TIGR02470">
    <property type="entry name" value="sucr_synth"/>
    <property type="match status" value="1"/>
</dbReference>
<dbReference type="PANTHER" id="PTHR45839">
    <property type="match status" value="1"/>
</dbReference>
<dbReference type="PANTHER" id="PTHR45839:SF31">
    <property type="entry name" value="SUCROSE SYNTHASE"/>
    <property type="match status" value="1"/>
</dbReference>
<dbReference type="Pfam" id="PF00534">
    <property type="entry name" value="Glycos_transf_1"/>
    <property type="match status" value="1"/>
</dbReference>
<dbReference type="Pfam" id="PF00862">
    <property type="entry name" value="GT-B_Sucrose_synth"/>
    <property type="match status" value="1"/>
</dbReference>
<dbReference type="Pfam" id="PF24862">
    <property type="entry name" value="SUS_EPBD"/>
    <property type="match status" value="1"/>
</dbReference>
<dbReference type="Pfam" id="PF24861">
    <property type="entry name" value="SUS_N"/>
    <property type="match status" value="1"/>
</dbReference>
<dbReference type="SUPFAM" id="SSF53756">
    <property type="entry name" value="UDP-Glycosyltransferase/glycogen phosphorylase"/>
    <property type="match status" value="1"/>
</dbReference>
<organism>
    <name type="scientific">Glycine max</name>
    <name type="common">Soybean</name>
    <name type="synonym">Glycine hispida</name>
    <dbReference type="NCBI Taxonomy" id="3847"/>
    <lineage>
        <taxon>Eukaryota</taxon>
        <taxon>Viridiplantae</taxon>
        <taxon>Streptophyta</taxon>
        <taxon>Embryophyta</taxon>
        <taxon>Tracheophyta</taxon>
        <taxon>Spermatophyta</taxon>
        <taxon>Magnoliopsida</taxon>
        <taxon>eudicotyledons</taxon>
        <taxon>Gunneridae</taxon>
        <taxon>Pentapetalae</taxon>
        <taxon>rosids</taxon>
        <taxon>fabids</taxon>
        <taxon>Fabales</taxon>
        <taxon>Fabaceae</taxon>
        <taxon>Papilionoideae</taxon>
        <taxon>50 kb inversion clade</taxon>
        <taxon>NPAAA clade</taxon>
        <taxon>indigoferoid/millettioid clade</taxon>
        <taxon>Phaseoleae</taxon>
        <taxon>Glycine</taxon>
        <taxon>Glycine subgen. Soja</taxon>
    </lineage>
</organism>
<name>SUS_SOYBN</name>
<accession>P13708</accession>
<accession>O22624</accession>
<proteinExistence type="evidence at protein level"/>
<evidence type="ECO:0000250" key="1">
    <source>
        <dbReference type="UniProtKB" id="P49040"/>
    </source>
</evidence>
<evidence type="ECO:0000255" key="2"/>
<evidence type="ECO:0000269" key="3">
    <source>
    </source>
</evidence>
<evidence type="ECO:0000305" key="4"/>
<sequence>MATDRLTRVHSLRERLDETLTANRNEILALLSRIEAKGKGILQHHQVIAEFEEIPEENRQKLTDGAFGEVLRSTQEAIVLPPWVALAVRPRPGVWEYLRVNVHALVVEELQPAEYLHFKEELVDGSSNGNFVLELDFEPFNAAFPRPTLNKSIGNGVQFLNRHLSAKLFHDKESLHPLLEFLRLHSVKGKTLMLNDRIQNPDALQHVLRKAEEYLGTVPPETPYSEFEHKFQEIGLERGWGDNAERVLESIQLLLDLLEAPDPCTLETFLGRIPMVFNVVILSPHGYFAQDNVLGYPDTGGQVVYILDQVRALENEMLHRIKQQGLDIVPRILIITRLLPDAVGTTCGQRLEKVFGTEHSHILRVPFRTEKGIVRKWISRFEVWPYLETYTEDVAHELAKELQGKPDLIVGNYSDGNIVASLLAHKLGVTQCTIAHALEKTKYPESDIYWKKLEERYHFSCQFTADLFAMNHTDFIITSTFQEIAGSKDTVGQYESHTAFTLPGLYRVVHGIDVFDPKFNIVSPGADQTIYFPHTETSRRLTSFHPEIEELLYSSVENEEHICVLKDRSKPIIFTMARLDRVKNITGLVEWYGKNAKLRELVNLVVVAGDRRKESKDLEEKAEMKKMYGLIETYKLNGQFRWISSQMNRVRNGELYRVICDTRGAFVQPAVYEAFGLTVVEAMTCGLPTFATCNGGPAEIIVHGKSGFHIDPYHGDRAADLLVDFFEKCKLDPTHWDKISKAGLQRIEEKYTWQIYSQRLLTLTGVYGFWKHVSNLDRRESRRYLEMFYALKYRKLAESVPLAAE</sequence>
<feature type="chain" id="PRO_0000204663" description="Sucrose synthase">
    <location>
        <begin position="1"/>
        <end position="805"/>
    </location>
</feature>
<feature type="region of interest" description="GT-B glycosyltransferase" evidence="1">
    <location>
        <begin position="275"/>
        <end position="752"/>
    </location>
</feature>
<feature type="modified residue" description="Phosphoserine; by CPK" evidence="2">
    <location>
        <position position="11"/>
    </location>
</feature>
<feature type="sequence conflict" description="In Ref. 2." evidence="4" ref="2">
    <original>V</original>
    <variation>L</variation>
    <location>
        <position position="680"/>
    </location>
</feature>
<feature type="sequence conflict" description="In Ref. 2." evidence="4" ref="2">
    <original>DK</original>
    <variation>ET</variation>
    <location>
        <begin position="737"/>
        <end position="738"/>
    </location>
</feature>
<feature type="sequence conflict" description="In Ref. 2." evidence="4" ref="2">
    <original>A</original>
    <variation>V</variation>
    <location>
        <position position="804"/>
    </location>
</feature>
<gene>
    <name type="primary">SS</name>
</gene>
<keyword id="KW-0328">Glycosyltransferase</keyword>
<keyword id="KW-0536">Nodulation</keyword>
<keyword id="KW-0597">Phosphoprotein</keyword>
<keyword id="KW-1185">Reference proteome</keyword>
<keyword id="KW-0808">Transferase</keyword>
<comment type="function">
    <text>Sucrose-cleaving enzyme that provides UDP-glucose and fructose for various metabolic pathways.</text>
</comment>
<comment type="catalytic activity">
    <reaction>
        <text>an NDP-alpha-D-glucose + D-fructose = a ribonucleoside 5'-diphosphate + sucrose + H(+)</text>
        <dbReference type="Rhea" id="RHEA:16241"/>
        <dbReference type="ChEBI" id="CHEBI:15378"/>
        <dbReference type="ChEBI" id="CHEBI:17992"/>
        <dbReference type="ChEBI" id="CHEBI:37721"/>
        <dbReference type="ChEBI" id="CHEBI:57930"/>
        <dbReference type="ChEBI" id="CHEBI:76533"/>
        <dbReference type="EC" id="2.4.1.13"/>
    </reaction>
</comment>
<comment type="subunit">
    <text>Homotetramer.</text>
</comment>
<comment type="PTM">
    <text evidence="3">Phosphorylated on serine residue(s).</text>
</comment>
<comment type="similarity">
    <text evidence="4">Belongs to the glycosyltransferase 1 family. Plant sucrose synthase subfamily.</text>
</comment>